<protein>
    <recommendedName>
        <fullName>Uncharacterized protein ycf56</fullName>
    </recommendedName>
    <alternativeName>
        <fullName>ORF263</fullName>
    </alternativeName>
</protein>
<organism>
    <name type="scientific">Porphyra purpurea</name>
    <name type="common">Red seaweed</name>
    <name type="synonym">Ulva purpurea</name>
    <dbReference type="NCBI Taxonomy" id="2787"/>
    <lineage>
        <taxon>Eukaryota</taxon>
        <taxon>Rhodophyta</taxon>
        <taxon>Bangiophyceae</taxon>
        <taxon>Bangiales</taxon>
        <taxon>Bangiaceae</taxon>
        <taxon>Porphyra</taxon>
    </lineage>
</organism>
<evidence type="ECO:0000305" key="1"/>
<reference key="1">
    <citation type="journal article" date="1995" name="Plant Mol. Biol. Rep.">
        <title>Complete nucleotide sequence of the Porphyra purpurea chloroplast genome.</title>
        <authorList>
            <person name="Reith M.E."/>
            <person name="Munholland J."/>
        </authorList>
    </citation>
    <scope>NUCLEOTIDE SEQUENCE [LARGE SCALE GENOMIC DNA]</scope>
    <source>
        <strain>Avonport</strain>
    </source>
</reference>
<accession>P51208</accession>
<sequence length="263" mass="29543">MEIILFDNKINSRFNKVTSTNYAAKLDQTSEIWLFNCIENTQHIFLKSQLKLSQITKIFISGTSFKYAAGLPGLLSSLTLSGKINTVSIYGPNSLKAYLQACTKYSQTNFSFSVNFHAVSYGKLVSGQSYTVICLPLSSNKLLYGFTILKKQQQGVFNLKKAITLNISQGPIYGELKGKHNFLSPDGYYLHGEDFSSSTTLGNKISIPVVLKYSRIISEMHWLSSYTVKSNTYPHQQATKYLLSNIETNVMNYQVSQDNNLIE</sequence>
<dbReference type="EMBL" id="U38804">
    <property type="protein sequence ID" value="AAC08094.1"/>
    <property type="molecule type" value="Genomic_DNA"/>
</dbReference>
<dbReference type="PIR" id="S73129">
    <property type="entry name" value="S73129"/>
</dbReference>
<dbReference type="SMR" id="P51208"/>
<dbReference type="GO" id="GO:0009507">
    <property type="term" value="C:chloroplast"/>
    <property type="evidence" value="ECO:0007669"/>
    <property type="project" value="UniProtKB-SubCell"/>
</dbReference>
<dbReference type="GO" id="GO:0042781">
    <property type="term" value="F:3'-tRNA processing endoribonuclease activity"/>
    <property type="evidence" value="ECO:0007669"/>
    <property type="project" value="TreeGrafter"/>
</dbReference>
<dbReference type="Gene3D" id="3.60.15.10">
    <property type="entry name" value="Ribonuclease Z/Hydroxyacylglutathione hydrolase-like"/>
    <property type="match status" value="1"/>
</dbReference>
<dbReference type="InterPro" id="IPR036866">
    <property type="entry name" value="RibonucZ/Hydroxyglut_hydro"/>
</dbReference>
<dbReference type="PANTHER" id="PTHR46018">
    <property type="entry name" value="ZINC PHOSPHODIESTERASE ELAC PROTEIN 1"/>
    <property type="match status" value="1"/>
</dbReference>
<dbReference type="PANTHER" id="PTHR46018:SF2">
    <property type="entry name" value="ZINC PHOSPHODIESTERASE ELAC PROTEIN 1"/>
    <property type="match status" value="1"/>
</dbReference>
<dbReference type="SUPFAM" id="SSF56281">
    <property type="entry name" value="Metallo-hydrolase/oxidoreductase"/>
    <property type="match status" value="1"/>
</dbReference>
<geneLocation type="chloroplast"/>
<name>YCF56_PORPU</name>
<keyword id="KW-0150">Chloroplast</keyword>
<keyword id="KW-0934">Plastid</keyword>
<gene>
    <name type="primary">ycf56</name>
</gene>
<proteinExistence type="inferred from homology"/>
<comment type="subcellular location">
    <subcellularLocation>
        <location>Plastid</location>
        <location>Chloroplast</location>
    </subcellularLocation>
</comment>
<comment type="similarity">
    <text evidence="1">Belongs to the AtsA family.</text>
</comment>
<feature type="chain" id="PRO_0000192686" description="Uncharacterized protein ycf56">
    <location>
        <begin position="1"/>
        <end position="263"/>
    </location>
</feature>